<comment type="function">
    <text evidence="1">F(1)F(0) ATP synthase produces ATP from ADP in the presence of a proton or sodium gradient. F-type ATPases consist of two structural domains, F(1) containing the extramembraneous catalytic core and F(0) containing the membrane proton channel, linked together by a central stalk and a peripheral stalk. During catalysis, ATP synthesis in the catalytic domain of F(1) is coupled via a rotary mechanism of the central stalk subunits to proton translocation.</text>
</comment>
<comment type="function">
    <text evidence="1">This protein is part of the stalk that links CF(0) to CF(1). It either transmits conformational changes from CF(0) to CF(1) or is implicated in proton conduction.</text>
</comment>
<comment type="subunit">
    <text evidence="1">F-type ATPases have 2 components, F(1) - the catalytic core - and F(0) - the membrane proton channel. F(1) has five subunits: alpha(3), beta(3), gamma(1), delta(1), epsilon(1). F(0) has three main subunits: a(1), b(2) and c(10-14). The alpha and beta chains form an alternating ring which encloses part of the gamma chain. F(1) is attached to F(0) by a central stalk formed by the gamma and epsilon chains, while a peripheral stalk is formed by the delta and b chains.</text>
</comment>
<comment type="subcellular location">
    <subcellularLocation>
        <location evidence="1">Cell membrane</location>
        <topology evidence="1">Peripheral membrane protein</topology>
    </subcellularLocation>
</comment>
<comment type="similarity">
    <text evidence="1">Belongs to the ATPase delta chain family.</text>
</comment>
<sequence length="178" mass="19887">MTKKEQALIEQYAKSLVEVASEHHSLDALQADVLAILETFVTTNLDQSLSSLAVPHAEKIKLLTLLKGNNSVYMNNFLNLILQNEREAYLYQMLQAVLNEIAIVSNQYDVTVTSSLPLTEEQKSRVRAVVAKKFAVTAGRLIEKVDPSLIGGFIISVNNKVIDTSIRRQLQAFKMNLK</sequence>
<gene>
    <name evidence="1" type="primary">atpH</name>
    <name type="ordered locus">Spy49_0585</name>
</gene>
<keyword id="KW-0066">ATP synthesis</keyword>
<keyword id="KW-1003">Cell membrane</keyword>
<keyword id="KW-0139">CF(1)</keyword>
<keyword id="KW-0375">Hydrogen ion transport</keyword>
<keyword id="KW-0406">Ion transport</keyword>
<keyword id="KW-0472">Membrane</keyword>
<keyword id="KW-0813">Transport</keyword>
<protein>
    <recommendedName>
        <fullName evidence="1">ATP synthase subunit delta</fullName>
    </recommendedName>
    <alternativeName>
        <fullName evidence="1">ATP synthase F(1) sector subunit delta</fullName>
    </alternativeName>
    <alternativeName>
        <fullName evidence="1">F-type ATPase subunit delta</fullName>
        <shortName evidence="1">F-ATPase subunit delta</shortName>
    </alternativeName>
</protein>
<proteinExistence type="inferred from homology"/>
<reference key="1">
    <citation type="journal article" date="2008" name="J. Bacteriol.">
        <title>Genome sequence of a nephritogenic and highly transformable M49 strain of Streptococcus pyogenes.</title>
        <authorList>
            <person name="McShan W.M."/>
            <person name="Ferretti J.J."/>
            <person name="Karasawa T."/>
            <person name="Suvorov A.N."/>
            <person name="Lin S."/>
            <person name="Qin B."/>
            <person name="Jia H."/>
            <person name="Kenton S."/>
            <person name="Najar F."/>
            <person name="Wu H."/>
            <person name="Scott J."/>
            <person name="Roe B.A."/>
            <person name="Savic D.J."/>
        </authorList>
    </citation>
    <scope>NUCLEOTIDE SEQUENCE [LARGE SCALE GENOMIC DNA]</scope>
    <source>
        <strain>NZ131</strain>
    </source>
</reference>
<organism>
    <name type="scientific">Streptococcus pyogenes serotype M49 (strain NZ131)</name>
    <dbReference type="NCBI Taxonomy" id="471876"/>
    <lineage>
        <taxon>Bacteria</taxon>
        <taxon>Bacillati</taxon>
        <taxon>Bacillota</taxon>
        <taxon>Bacilli</taxon>
        <taxon>Lactobacillales</taxon>
        <taxon>Streptococcaceae</taxon>
        <taxon>Streptococcus</taxon>
    </lineage>
</organism>
<accession>B5XKP8</accession>
<feature type="chain" id="PRO_0000371164" description="ATP synthase subunit delta">
    <location>
        <begin position="1"/>
        <end position="178"/>
    </location>
</feature>
<evidence type="ECO:0000255" key="1">
    <source>
        <dbReference type="HAMAP-Rule" id="MF_01416"/>
    </source>
</evidence>
<name>ATPD_STRPZ</name>
<dbReference type="EMBL" id="CP000829">
    <property type="protein sequence ID" value="ACI60910.1"/>
    <property type="molecule type" value="Genomic_DNA"/>
</dbReference>
<dbReference type="SMR" id="B5XKP8"/>
<dbReference type="KEGG" id="soz:Spy49_0585"/>
<dbReference type="HOGENOM" id="CLU_085114_1_2_9"/>
<dbReference type="Proteomes" id="UP000001039">
    <property type="component" value="Chromosome"/>
</dbReference>
<dbReference type="GO" id="GO:0005886">
    <property type="term" value="C:plasma membrane"/>
    <property type="evidence" value="ECO:0007669"/>
    <property type="project" value="UniProtKB-SubCell"/>
</dbReference>
<dbReference type="GO" id="GO:0045259">
    <property type="term" value="C:proton-transporting ATP synthase complex"/>
    <property type="evidence" value="ECO:0007669"/>
    <property type="project" value="UniProtKB-KW"/>
</dbReference>
<dbReference type="GO" id="GO:0046933">
    <property type="term" value="F:proton-transporting ATP synthase activity, rotational mechanism"/>
    <property type="evidence" value="ECO:0007669"/>
    <property type="project" value="UniProtKB-UniRule"/>
</dbReference>
<dbReference type="Gene3D" id="1.10.520.20">
    <property type="entry name" value="N-terminal domain of the delta subunit of the F1F0-ATP synthase"/>
    <property type="match status" value="1"/>
</dbReference>
<dbReference type="HAMAP" id="MF_01416">
    <property type="entry name" value="ATP_synth_delta_bact"/>
    <property type="match status" value="1"/>
</dbReference>
<dbReference type="InterPro" id="IPR026015">
    <property type="entry name" value="ATP_synth_OSCP/delta_N_sf"/>
</dbReference>
<dbReference type="InterPro" id="IPR000711">
    <property type="entry name" value="ATPase_OSCP/dsu"/>
</dbReference>
<dbReference type="NCBIfam" id="TIGR01145">
    <property type="entry name" value="ATP_synt_delta"/>
    <property type="match status" value="1"/>
</dbReference>
<dbReference type="NCBIfam" id="NF004401">
    <property type="entry name" value="PRK05758.2-1"/>
    <property type="match status" value="1"/>
</dbReference>
<dbReference type="PANTHER" id="PTHR11910">
    <property type="entry name" value="ATP SYNTHASE DELTA CHAIN"/>
    <property type="match status" value="1"/>
</dbReference>
<dbReference type="Pfam" id="PF00213">
    <property type="entry name" value="OSCP"/>
    <property type="match status" value="1"/>
</dbReference>
<dbReference type="PRINTS" id="PR00125">
    <property type="entry name" value="ATPASEDELTA"/>
</dbReference>
<dbReference type="SUPFAM" id="SSF47928">
    <property type="entry name" value="N-terminal domain of the delta subunit of the F1F0-ATP synthase"/>
    <property type="match status" value="1"/>
</dbReference>